<keyword id="KW-1185">Reference proteome</keyword>
<keyword id="KW-0687">Ribonucleoprotein</keyword>
<keyword id="KW-0689">Ribosomal protein</keyword>
<reference key="1">
    <citation type="journal article" date="2009" name="J. Bacteriol.">
        <title>Complete genome sequence of Erythrobacter litoralis HTCC2594.</title>
        <authorList>
            <person name="Oh H.M."/>
            <person name="Giovannoni S.J."/>
            <person name="Ferriera S."/>
            <person name="Johnson J."/>
            <person name="Cho J.C."/>
        </authorList>
    </citation>
    <scope>NUCLEOTIDE SEQUENCE [LARGE SCALE GENOMIC DNA]</scope>
    <source>
        <strain>HTCC2594</strain>
    </source>
</reference>
<feature type="chain" id="PRO_0000302201" description="Large ribosomal subunit protein bL36">
    <location>
        <begin position="1"/>
        <end position="41"/>
    </location>
</feature>
<name>RL36_ERYLH</name>
<organism>
    <name type="scientific">Erythrobacter litoralis (strain HTCC2594)</name>
    <dbReference type="NCBI Taxonomy" id="314225"/>
    <lineage>
        <taxon>Bacteria</taxon>
        <taxon>Pseudomonadati</taxon>
        <taxon>Pseudomonadota</taxon>
        <taxon>Alphaproteobacteria</taxon>
        <taxon>Sphingomonadales</taxon>
        <taxon>Erythrobacteraceae</taxon>
        <taxon>Erythrobacter/Porphyrobacter group</taxon>
        <taxon>Erythrobacter</taxon>
    </lineage>
</organism>
<sequence>MKVRNSLKSLKNRHRDCRVIRRRGRTYVINKTNRRFKARQG</sequence>
<protein>
    <recommendedName>
        <fullName evidence="1">Large ribosomal subunit protein bL36</fullName>
    </recommendedName>
    <alternativeName>
        <fullName evidence="2">50S ribosomal protein L36</fullName>
    </alternativeName>
</protein>
<accession>Q2N7R4</accession>
<dbReference type="EMBL" id="CP000157">
    <property type="protein sequence ID" value="ABC64277.1"/>
    <property type="molecule type" value="Genomic_DNA"/>
</dbReference>
<dbReference type="SMR" id="Q2N7R4"/>
<dbReference type="STRING" id="314225.ELI_10925"/>
<dbReference type="KEGG" id="eli:ELI_10925"/>
<dbReference type="eggNOG" id="COG0257">
    <property type="taxonomic scope" value="Bacteria"/>
</dbReference>
<dbReference type="HOGENOM" id="CLU_135723_3_2_5"/>
<dbReference type="OrthoDB" id="9801558at2"/>
<dbReference type="Proteomes" id="UP000008808">
    <property type="component" value="Chromosome"/>
</dbReference>
<dbReference type="GO" id="GO:1990904">
    <property type="term" value="C:ribonucleoprotein complex"/>
    <property type="evidence" value="ECO:0007669"/>
    <property type="project" value="UniProtKB-KW"/>
</dbReference>
<dbReference type="GO" id="GO:0005840">
    <property type="term" value="C:ribosome"/>
    <property type="evidence" value="ECO:0007669"/>
    <property type="project" value="UniProtKB-KW"/>
</dbReference>
<dbReference type="GO" id="GO:0003735">
    <property type="term" value="F:structural constituent of ribosome"/>
    <property type="evidence" value="ECO:0007669"/>
    <property type="project" value="InterPro"/>
</dbReference>
<dbReference type="GO" id="GO:0006412">
    <property type="term" value="P:translation"/>
    <property type="evidence" value="ECO:0007669"/>
    <property type="project" value="UniProtKB-UniRule"/>
</dbReference>
<dbReference type="HAMAP" id="MF_00251">
    <property type="entry name" value="Ribosomal_bL36"/>
    <property type="match status" value="1"/>
</dbReference>
<dbReference type="InterPro" id="IPR000473">
    <property type="entry name" value="Ribosomal_bL36"/>
</dbReference>
<dbReference type="InterPro" id="IPR035977">
    <property type="entry name" value="Ribosomal_bL36_sp"/>
</dbReference>
<dbReference type="InterPro" id="IPR047621">
    <property type="entry name" value="Ribosomal_L36_bact"/>
</dbReference>
<dbReference type="NCBIfam" id="NF002021">
    <property type="entry name" value="PRK00831.1"/>
    <property type="match status" value="1"/>
</dbReference>
<dbReference type="NCBIfam" id="TIGR01022">
    <property type="entry name" value="rpmJ_bact"/>
    <property type="match status" value="1"/>
</dbReference>
<dbReference type="PANTHER" id="PTHR47781">
    <property type="entry name" value="50S RIBOSOMAL PROTEIN L36 2"/>
    <property type="match status" value="1"/>
</dbReference>
<dbReference type="PANTHER" id="PTHR47781:SF1">
    <property type="entry name" value="LARGE RIBOSOMAL SUBUNIT PROTEIN BL36B"/>
    <property type="match status" value="1"/>
</dbReference>
<dbReference type="Pfam" id="PF00444">
    <property type="entry name" value="Ribosomal_L36"/>
    <property type="match status" value="1"/>
</dbReference>
<dbReference type="SUPFAM" id="SSF57840">
    <property type="entry name" value="Ribosomal protein L36"/>
    <property type="match status" value="1"/>
</dbReference>
<gene>
    <name evidence="1" type="primary">rpmJ</name>
    <name type="ordered locus">ELI_10925</name>
</gene>
<proteinExistence type="inferred from homology"/>
<evidence type="ECO:0000255" key="1">
    <source>
        <dbReference type="HAMAP-Rule" id="MF_00251"/>
    </source>
</evidence>
<evidence type="ECO:0000305" key="2"/>
<comment type="similarity">
    <text evidence="1">Belongs to the bacterial ribosomal protein bL36 family.</text>
</comment>